<gene>
    <name evidence="3" type="primary">mbiA</name>
    <name evidence="5" type="synonym">htgA</name>
    <name evidence="6" type="ordered locus">ECs0011</name>
    <name evidence="5" type="ordered locus">Z0012</name>
</gene>
<evidence type="ECO:0000250" key="1">
    <source>
        <dbReference type="UniProtKB" id="P28697"/>
    </source>
</evidence>
<evidence type="ECO:0000269" key="2">
    <source>
    </source>
</evidence>
<evidence type="ECO:0000303" key="3">
    <source>
    </source>
</evidence>
<evidence type="ECO:0000305" key="4"/>
<evidence type="ECO:0000312" key="5">
    <source>
        <dbReference type="EMBL" id="AAG54312.1"/>
    </source>
</evidence>
<evidence type="ECO:0000312" key="6">
    <source>
        <dbReference type="EMBL" id="BAB33435.1"/>
    </source>
</evidence>
<feature type="chain" id="PRO_0000440621" description="Uncharacterized protein MbiA">
    <location>
        <begin position="1"/>
        <end position="171"/>
    </location>
</feature>
<organism>
    <name type="scientific">Escherichia coli O157:H7</name>
    <dbReference type="NCBI Taxonomy" id="83334"/>
    <lineage>
        <taxon>Bacteria</taxon>
        <taxon>Pseudomonadati</taxon>
        <taxon>Pseudomonadota</taxon>
        <taxon>Gammaproteobacteria</taxon>
        <taxon>Enterobacterales</taxon>
        <taxon>Enterobacteriaceae</taxon>
        <taxon>Escherichia</taxon>
    </lineage>
</organism>
<protein>
    <recommendedName>
        <fullName evidence="4">Uncharacterized protein MbiA</fullName>
    </recommendedName>
    <alternativeName>
        <fullName evidence="3">Modifier of biofilm</fullName>
    </alternativeName>
</protein>
<keyword id="KW-1185">Reference proteome</keyword>
<name>MBIA_ECO57</name>
<reference key="1">
    <citation type="journal article" date="2001" name="Nature">
        <title>Genome sequence of enterohaemorrhagic Escherichia coli O157:H7.</title>
        <authorList>
            <person name="Perna N.T."/>
            <person name="Plunkett G. III"/>
            <person name="Burland V."/>
            <person name="Mau B."/>
            <person name="Glasner J.D."/>
            <person name="Rose D.J."/>
            <person name="Mayhew G.F."/>
            <person name="Evans P.S."/>
            <person name="Gregor J."/>
            <person name="Kirkpatrick H.A."/>
            <person name="Posfai G."/>
            <person name="Hackett J."/>
            <person name="Klink S."/>
            <person name="Boutin A."/>
            <person name="Shao Y."/>
            <person name="Miller L."/>
            <person name="Grotbeck E.J."/>
            <person name="Davis N.W."/>
            <person name="Lim A."/>
            <person name="Dimalanta E.T."/>
            <person name="Potamousis K."/>
            <person name="Apodaca J."/>
            <person name="Anantharaman T.S."/>
            <person name="Lin J."/>
            <person name="Yen G."/>
            <person name="Schwartz D.C."/>
            <person name="Welch R.A."/>
            <person name="Blattner F.R."/>
        </authorList>
    </citation>
    <scope>NUCLEOTIDE SEQUENCE [LARGE SCALE GENOMIC DNA]</scope>
    <source>
        <strain>O157:H7 / EDL933 / ATCC 700927 / EHEC</strain>
    </source>
</reference>
<reference key="2">
    <citation type="journal article" date="2001" name="DNA Res.">
        <title>Complete genome sequence of enterohemorrhagic Escherichia coli O157:H7 and genomic comparison with a laboratory strain K-12.</title>
        <authorList>
            <person name="Hayashi T."/>
            <person name="Makino K."/>
            <person name="Ohnishi M."/>
            <person name="Kurokawa K."/>
            <person name="Ishii K."/>
            <person name="Yokoyama K."/>
            <person name="Han C.-G."/>
            <person name="Ohtsubo E."/>
            <person name="Nakayama K."/>
            <person name="Murata T."/>
            <person name="Tanaka M."/>
            <person name="Tobe T."/>
            <person name="Iida T."/>
            <person name="Takami H."/>
            <person name="Honda T."/>
            <person name="Sasakawa C."/>
            <person name="Ogasawara N."/>
            <person name="Yasunaga T."/>
            <person name="Kuhara S."/>
            <person name="Shiba T."/>
            <person name="Hattori M."/>
            <person name="Shinagawa H."/>
        </authorList>
    </citation>
    <scope>NUCLEOTIDE SEQUENCE [LARGE SCALE GENOMIC DNA]</scope>
    <source>
        <strain>O157:H7 / Sakai / RIMD 0509952 / EHEC</strain>
    </source>
</reference>
<reference key="3">
    <citation type="journal article" date="2014" name="FEMS Microbiol. Lett.">
        <title>Phenotype of htgA (mbiA), a recently evolved orphan gene of Escherichia coli and Shigella, completely overlapping in antisense to yaaW.</title>
        <authorList>
            <person name="Fellner L."/>
            <person name="Bechtel N."/>
            <person name="Witting M.A."/>
            <person name="Simon S."/>
            <person name="Schmitt-Kopplin P."/>
            <person name="Keim D."/>
            <person name="Scherer S."/>
            <person name="Neuhaus K."/>
        </authorList>
    </citation>
    <scope>DISRUPTION PHENOTYPE</scope>
</reference>
<proteinExistence type="inferred from homology"/>
<dbReference type="EMBL" id="AE005174">
    <property type="protein sequence ID" value="AAG54312.1"/>
    <property type="status" value="ALT_INIT"/>
    <property type="molecule type" value="Genomic_DNA"/>
</dbReference>
<dbReference type="EMBL" id="BA000007">
    <property type="protein sequence ID" value="BAB33435.1"/>
    <property type="status" value="ALT_INIT"/>
    <property type="molecule type" value="Genomic_DNA"/>
</dbReference>
<dbReference type="PIR" id="D85481">
    <property type="entry name" value="D85481"/>
</dbReference>
<dbReference type="PIR" id="D90630">
    <property type="entry name" value="D90630"/>
</dbReference>
<dbReference type="STRING" id="155864.Z0012"/>
<dbReference type="KEGG" id="ece:Z0012"/>
<dbReference type="HOGENOM" id="CLU_1537672_0_0_6"/>
<dbReference type="Proteomes" id="UP000000558">
    <property type="component" value="Chromosome"/>
</dbReference>
<dbReference type="Proteomes" id="UP000002519">
    <property type="component" value="Chromosome"/>
</dbReference>
<sequence length="171" mass="18959">MRVSWLESRCDTPFANNLSFISSGSSSSSSFTLASTACRNSCLCSSSIFFQVLRRNCSSNCCSISNVDISLSAFSFNRFETSSKMARYNLPCPRSLLAILSPPKCCNSPAISCQLRRCCSGCPSIDLNSSLRISTLERRVLPFSLWVSSRAKFANCSSLQCWRKSRSESFR</sequence>
<accession>Q8XA70</accession>
<accession>Q7AHU6</accession>
<comment type="disruption phenotype">
    <text evidence="2">Strand-specific deletion mutant, which disrupts only mbiA, shows no difference in growth compared with wild-type strain at 37 degrees Celsius or after heat shock. Biofilm formation is increased at 37 degrees Celsius.</text>
</comment>
<comment type="caution">
    <text evidence="1">This gene is encoded entirely within the yaaW gene on the opposite strand. Disruptions of one gene are also usually disruptions in the other.</text>
</comment>
<comment type="sequence caution" evidence="4">
    <conflict type="erroneous initiation">
        <sequence resource="EMBL-CDS" id="AAG54312"/>
    </conflict>
    <text>Extended N-terminus.</text>
</comment>
<comment type="sequence caution" evidence="4">
    <conflict type="erroneous initiation">
        <sequence resource="EMBL-CDS" id="BAB33435"/>
    </conflict>
    <text>Extended N-terminus.</text>
</comment>